<name>PROB_THEVB</name>
<organism>
    <name type="scientific">Thermosynechococcus vestitus (strain NIES-2133 / IAM M-273 / BP-1)</name>
    <dbReference type="NCBI Taxonomy" id="197221"/>
    <lineage>
        <taxon>Bacteria</taxon>
        <taxon>Bacillati</taxon>
        <taxon>Cyanobacteriota</taxon>
        <taxon>Cyanophyceae</taxon>
        <taxon>Acaryochloridales</taxon>
        <taxon>Thermosynechococcaceae</taxon>
        <taxon>Thermosynechococcus</taxon>
    </lineage>
</organism>
<accession>Q8DH42</accession>
<comment type="function">
    <text evidence="1">Catalyzes the transfer of a phosphate group to glutamate to form L-glutamate 5-phosphate.</text>
</comment>
<comment type="catalytic activity">
    <reaction evidence="1">
        <text>L-glutamate + ATP = L-glutamyl 5-phosphate + ADP</text>
        <dbReference type="Rhea" id="RHEA:14877"/>
        <dbReference type="ChEBI" id="CHEBI:29985"/>
        <dbReference type="ChEBI" id="CHEBI:30616"/>
        <dbReference type="ChEBI" id="CHEBI:58274"/>
        <dbReference type="ChEBI" id="CHEBI:456216"/>
        <dbReference type="EC" id="2.7.2.11"/>
    </reaction>
</comment>
<comment type="pathway">
    <text evidence="1">Amino-acid biosynthesis; L-proline biosynthesis; L-glutamate 5-semialdehyde from L-glutamate: step 1/2.</text>
</comment>
<comment type="subcellular location">
    <subcellularLocation>
        <location evidence="1">Cytoplasm</location>
    </subcellularLocation>
</comment>
<comment type="similarity">
    <text evidence="1">Belongs to the glutamate 5-kinase family.</text>
</comment>
<dbReference type="EC" id="2.7.2.11" evidence="1"/>
<dbReference type="EMBL" id="BA000039">
    <property type="protein sequence ID" value="BAC09670.1"/>
    <property type="molecule type" value="Genomic_DNA"/>
</dbReference>
<dbReference type="RefSeq" id="NP_682908.1">
    <property type="nucleotide sequence ID" value="NC_004113.1"/>
</dbReference>
<dbReference type="RefSeq" id="WP_011057952.1">
    <property type="nucleotide sequence ID" value="NC_004113.1"/>
</dbReference>
<dbReference type="SMR" id="Q8DH42"/>
<dbReference type="STRING" id="197221.gene:10748729"/>
<dbReference type="EnsemblBacteria" id="BAC09670">
    <property type="protein sequence ID" value="BAC09670"/>
    <property type="gene ID" value="BAC09670"/>
</dbReference>
<dbReference type="KEGG" id="tel:tll2118"/>
<dbReference type="PATRIC" id="fig|197221.4.peg.2217"/>
<dbReference type="eggNOG" id="COG0263">
    <property type="taxonomic scope" value="Bacteria"/>
</dbReference>
<dbReference type="UniPathway" id="UPA00098">
    <property type="reaction ID" value="UER00359"/>
</dbReference>
<dbReference type="Proteomes" id="UP000000440">
    <property type="component" value="Chromosome"/>
</dbReference>
<dbReference type="GO" id="GO:0005829">
    <property type="term" value="C:cytosol"/>
    <property type="evidence" value="ECO:0007669"/>
    <property type="project" value="TreeGrafter"/>
</dbReference>
<dbReference type="GO" id="GO:0005524">
    <property type="term" value="F:ATP binding"/>
    <property type="evidence" value="ECO:0007669"/>
    <property type="project" value="UniProtKB-KW"/>
</dbReference>
<dbReference type="GO" id="GO:0004349">
    <property type="term" value="F:glutamate 5-kinase activity"/>
    <property type="evidence" value="ECO:0007669"/>
    <property type="project" value="UniProtKB-UniRule"/>
</dbReference>
<dbReference type="GO" id="GO:0003723">
    <property type="term" value="F:RNA binding"/>
    <property type="evidence" value="ECO:0007669"/>
    <property type="project" value="InterPro"/>
</dbReference>
<dbReference type="GO" id="GO:0055129">
    <property type="term" value="P:L-proline biosynthetic process"/>
    <property type="evidence" value="ECO:0007669"/>
    <property type="project" value="UniProtKB-UniRule"/>
</dbReference>
<dbReference type="CDD" id="cd04242">
    <property type="entry name" value="AAK_G5K_ProB"/>
    <property type="match status" value="1"/>
</dbReference>
<dbReference type="CDD" id="cd21157">
    <property type="entry name" value="PUA_G5K"/>
    <property type="match status" value="1"/>
</dbReference>
<dbReference type="FunFam" id="2.30.130.10:FF:000007">
    <property type="entry name" value="Glutamate 5-kinase"/>
    <property type="match status" value="1"/>
</dbReference>
<dbReference type="FunFam" id="3.40.1160.10:FF:000018">
    <property type="entry name" value="Glutamate 5-kinase"/>
    <property type="match status" value="1"/>
</dbReference>
<dbReference type="Gene3D" id="3.40.1160.10">
    <property type="entry name" value="Acetylglutamate kinase-like"/>
    <property type="match status" value="1"/>
</dbReference>
<dbReference type="Gene3D" id="2.30.130.10">
    <property type="entry name" value="PUA domain"/>
    <property type="match status" value="1"/>
</dbReference>
<dbReference type="HAMAP" id="MF_00456">
    <property type="entry name" value="ProB"/>
    <property type="match status" value="1"/>
</dbReference>
<dbReference type="InterPro" id="IPR036393">
    <property type="entry name" value="AceGlu_kinase-like_sf"/>
</dbReference>
<dbReference type="InterPro" id="IPR001048">
    <property type="entry name" value="Asp/Glu/Uridylate_kinase"/>
</dbReference>
<dbReference type="InterPro" id="IPR041739">
    <property type="entry name" value="G5K_ProB"/>
</dbReference>
<dbReference type="InterPro" id="IPR001057">
    <property type="entry name" value="Glu/AcGlu_kinase"/>
</dbReference>
<dbReference type="InterPro" id="IPR011529">
    <property type="entry name" value="Glu_5kinase"/>
</dbReference>
<dbReference type="InterPro" id="IPR005715">
    <property type="entry name" value="Glu_5kinase/COase_Synthase"/>
</dbReference>
<dbReference type="InterPro" id="IPR019797">
    <property type="entry name" value="Glutamate_5-kinase_CS"/>
</dbReference>
<dbReference type="InterPro" id="IPR002478">
    <property type="entry name" value="PUA"/>
</dbReference>
<dbReference type="InterPro" id="IPR015947">
    <property type="entry name" value="PUA-like_sf"/>
</dbReference>
<dbReference type="InterPro" id="IPR036974">
    <property type="entry name" value="PUA_sf"/>
</dbReference>
<dbReference type="NCBIfam" id="TIGR01027">
    <property type="entry name" value="proB"/>
    <property type="match status" value="1"/>
</dbReference>
<dbReference type="PANTHER" id="PTHR43654">
    <property type="entry name" value="GLUTAMATE 5-KINASE"/>
    <property type="match status" value="1"/>
</dbReference>
<dbReference type="PANTHER" id="PTHR43654:SF3">
    <property type="entry name" value="GLUTAMATE 5-KINASE"/>
    <property type="match status" value="1"/>
</dbReference>
<dbReference type="Pfam" id="PF00696">
    <property type="entry name" value="AA_kinase"/>
    <property type="match status" value="1"/>
</dbReference>
<dbReference type="Pfam" id="PF01472">
    <property type="entry name" value="PUA"/>
    <property type="match status" value="1"/>
</dbReference>
<dbReference type="PIRSF" id="PIRSF000729">
    <property type="entry name" value="GK"/>
    <property type="match status" value="1"/>
</dbReference>
<dbReference type="PRINTS" id="PR00474">
    <property type="entry name" value="GLU5KINASE"/>
</dbReference>
<dbReference type="SMART" id="SM00359">
    <property type="entry name" value="PUA"/>
    <property type="match status" value="1"/>
</dbReference>
<dbReference type="SUPFAM" id="SSF53633">
    <property type="entry name" value="Carbamate kinase-like"/>
    <property type="match status" value="1"/>
</dbReference>
<dbReference type="SUPFAM" id="SSF88697">
    <property type="entry name" value="PUA domain-like"/>
    <property type="match status" value="1"/>
</dbReference>
<dbReference type="PROSITE" id="PS00902">
    <property type="entry name" value="GLUTAMATE_5_KINASE"/>
    <property type="match status" value="1"/>
</dbReference>
<dbReference type="PROSITE" id="PS50890">
    <property type="entry name" value="PUA"/>
    <property type="match status" value="1"/>
</dbReference>
<proteinExistence type="inferred from homology"/>
<evidence type="ECO:0000255" key="1">
    <source>
        <dbReference type="HAMAP-Rule" id="MF_00456"/>
    </source>
</evidence>
<reference key="1">
    <citation type="journal article" date="2002" name="DNA Res.">
        <title>Complete genome structure of the thermophilic cyanobacterium Thermosynechococcus elongatus BP-1.</title>
        <authorList>
            <person name="Nakamura Y."/>
            <person name="Kaneko T."/>
            <person name="Sato S."/>
            <person name="Ikeuchi M."/>
            <person name="Katoh H."/>
            <person name="Sasamoto S."/>
            <person name="Watanabe A."/>
            <person name="Iriguchi M."/>
            <person name="Kawashima K."/>
            <person name="Kimura T."/>
            <person name="Kishida Y."/>
            <person name="Kiyokawa C."/>
            <person name="Kohara M."/>
            <person name="Matsumoto M."/>
            <person name="Matsuno A."/>
            <person name="Nakazaki N."/>
            <person name="Shimpo S."/>
            <person name="Sugimoto M."/>
            <person name="Takeuchi C."/>
            <person name="Yamada M."/>
            <person name="Tabata S."/>
        </authorList>
    </citation>
    <scope>NUCLEOTIDE SEQUENCE [LARGE SCALE GENOMIC DNA]</scope>
    <source>
        <strain>NIES-2133 / IAM M-273 / BP-1</strain>
    </source>
</reference>
<gene>
    <name evidence="1" type="primary">proB</name>
    <name type="ordered locus">tll2118</name>
</gene>
<feature type="chain" id="PRO_0000109742" description="Glutamate 5-kinase">
    <location>
        <begin position="1"/>
        <end position="369"/>
    </location>
</feature>
<feature type="domain" description="PUA" evidence="1">
    <location>
        <begin position="276"/>
        <end position="354"/>
    </location>
</feature>
<feature type="binding site" evidence="1">
    <location>
        <position position="8"/>
    </location>
    <ligand>
        <name>ATP</name>
        <dbReference type="ChEBI" id="CHEBI:30616"/>
    </ligand>
</feature>
<feature type="binding site" evidence="1">
    <location>
        <position position="49"/>
    </location>
    <ligand>
        <name>substrate</name>
    </ligand>
</feature>
<feature type="binding site" evidence="1">
    <location>
        <position position="136"/>
    </location>
    <ligand>
        <name>substrate</name>
    </ligand>
</feature>
<feature type="binding site" evidence="1">
    <location>
        <position position="148"/>
    </location>
    <ligand>
        <name>substrate</name>
    </ligand>
</feature>
<feature type="binding site" evidence="1">
    <location>
        <begin position="168"/>
        <end position="169"/>
    </location>
    <ligand>
        <name>ATP</name>
        <dbReference type="ChEBI" id="CHEBI:30616"/>
    </ligand>
</feature>
<feature type="binding site" evidence="1">
    <location>
        <begin position="211"/>
        <end position="217"/>
    </location>
    <ligand>
        <name>ATP</name>
        <dbReference type="ChEBI" id="CHEBI:30616"/>
    </ligand>
</feature>
<protein>
    <recommendedName>
        <fullName evidence="1">Glutamate 5-kinase</fullName>
        <ecNumber evidence="1">2.7.2.11</ecNumber>
    </recommendedName>
    <alternativeName>
        <fullName evidence="1">Gamma-glutamyl kinase</fullName>
        <shortName evidence="1">GK</shortName>
    </alternativeName>
</protein>
<keyword id="KW-0028">Amino-acid biosynthesis</keyword>
<keyword id="KW-0067">ATP-binding</keyword>
<keyword id="KW-0963">Cytoplasm</keyword>
<keyword id="KW-0418">Kinase</keyword>
<keyword id="KW-0547">Nucleotide-binding</keyword>
<keyword id="KW-0641">Proline biosynthesis</keyword>
<keyword id="KW-1185">Reference proteome</keyword>
<keyword id="KW-0808">Transferase</keyword>
<sequence length="369" mass="39614">MAQTLVVKIGTSSLAGGKEGNLALATIAQLVEVLCHCQRRGDRVVLVSSGAVGVGAMRLGLTERPQQLAQKQAVAAVGQGHLMRMYDDLFAVLRQPIAQILVTRQNFVDRQSYLNIYNTFQALFELGVIPIVNENDTVAVDELKFGDNDTLSALVASLVEADWLFLLTDVDRLYSADPRIDKTAVPIERVVSLAELAQTIQVGSAGSPWGTGGMATKIRAAEIATEAGVRTVITDGRSPTNLLKILGGEALGTHFEPRPKTINARKRWIARALIPKGELWLDEGAVKAITVGGKSLLAAGITRVEGEFQAQDAVKLCDPTGAEIARGLVNYNSEEIRRVQGQQSTELANILGYAGADTIVHRDNLVVTL</sequence>